<accession>Q8ZKW4</accession>
<organism>
    <name type="scientific">Salmonella typhimurium (strain LT2 / SGSC1412 / ATCC 700720)</name>
    <dbReference type="NCBI Taxonomy" id="99287"/>
    <lineage>
        <taxon>Bacteria</taxon>
        <taxon>Pseudomonadati</taxon>
        <taxon>Pseudomonadota</taxon>
        <taxon>Gammaproteobacteria</taxon>
        <taxon>Enterobacterales</taxon>
        <taxon>Enterobacteriaceae</taxon>
        <taxon>Salmonella</taxon>
    </lineage>
</organism>
<reference key="1">
    <citation type="journal article" date="2001" name="Nature">
        <title>Complete genome sequence of Salmonella enterica serovar Typhimurium LT2.</title>
        <authorList>
            <person name="McClelland M."/>
            <person name="Sanderson K.E."/>
            <person name="Spieth J."/>
            <person name="Clifton S.W."/>
            <person name="Latreille P."/>
            <person name="Courtney L."/>
            <person name="Porwollik S."/>
            <person name="Ali J."/>
            <person name="Dante M."/>
            <person name="Du F."/>
            <person name="Hou S."/>
            <person name="Layman D."/>
            <person name="Leonard S."/>
            <person name="Nguyen C."/>
            <person name="Scott K."/>
            <person name="Holmes A."/>
            <person name="Grewal N."/>
            <person name="Mulvaney E."/>
            <person name="Ryan E."/>
            <person name="Sun H."/>
            <person name="Florea L."/>
            <person name="Miller W."/>
            <person name="Stoneking T."/>
            <person name="Nhan M."/>
            <person name="Waterston R."/>
            <person name="Wilson R.K."/>
        </authorList>
    </citation>
    <scope>NUCLEOTIDE SEQUENCE [LARGE SCALE GENOMIC DNA]</scope>
    <source>
        <strain>LT2 / SGSC1412 / ATCC 700720</strain>
    </source>
</reference>
<comment type="catalytic activity">
    <reaction evidence="2">
        <text>L-aspartate + NH4(+) + ATP = L-asparagine + AMP + diphosphate + H(+)</text>
        <dbReference type="Rhea" id="RHEA:11372"/>
        <dbReference type="ChEBI" id="CHEBI:15378"/>
        <dbReference type="ChEBI" id="CHEBI:28938"/>
        <dbReference type="ChEBI" id="CHEBI:29991"/>
        <dbReference type="ChEBI" id="CHEBI:30616"/>
        <dbReference type="ChEBI" id="CHEBI:33019"/>
        <dbReference type="ChEBI" id="CHEBI:58048"/>
        <dbReference type="ChEBI" id="CHEBI:456215"/>
        <dbReference type="EC" id="6.3.1.1"/>
    </reaction>
</comment>
<comment type="pathway">
    <text evidence="2">Amino-acid biosynthesis; L-asparagine biosynthesis; L-asparagine from L-aspartate (ammonia route): step 1/1.</text>
</comment>
<comment type="subunit">
    <text evidence="1">Homodimer.</text>
</comment>
<comment type="subcellular location">
    <subcellularLocation>
        <location evidence="2">Cytoplasm</location>
    </subcellularLocation>
</comment>
<comment type="similarity">
    <text evidence="2">Belongs to the class-II aminoacyl-tRNA synthetase family. AsnA subfamily.</text>
</comment>
<sequence>MKTAYIAKQRQISFVKSHFSRQLEERLGLIEVQAPILSRVGDGTQDNLSGCEKAVQVKVKALPDAQFEVVHSLAKWKRQTLGQHDFSAGEGLYTHMKALRPDEDRLSPLHSVYVDQWDWERVMGDGERQFSTLKSTVEAIWAGIKATEAEVHKQFGLAPFLPEQIQFVHSQELLARFPDLDAKGRERAIAKELGAVFLVGIGGKLSDGHRHDVRAPDYDDWSSASELGYAGLNGDILVWNPVLEDAFELSSMGIRVDADTLMRQLALTGDEDRLQLEWHQALLRGEMPQTIGGGIGQSRLTMLLLQLPHIGQVQCGVWPAQVRESIPAIL</sequence>
<dbReference type="EC" id="6.3.1.1" evidence="2"/>
<dbReference type="EMBL" id="AE006468">
    <property type="protein sequence ID" value="AAL22735.1"/>
    <property type="molecule type" value="Genomic_DNA"/>
</dbReference>
<dbReference type="RefSeq" id="NP_462776.1">
    <property type="nucleotide sequence ID" value="NC_003197.2"/>
</dbReference>
<dbReference type="RefSeq" id="WP_000845121.1">
    <property type="nucleotide sequence ID" value="NC_003197.2"/>
</dbReference>
<dbReference type="SMR" id="Q8ZKW4"/>
<dbReference type="STRING" id="99287.STM3877"/>
<dbReference type="PaxDb" id="99287-STM3877"/>
<dbReference type="GeneID" id="1255404"/>
<dbReference type="KEGG" id="stm:STM3877"/>
<dbReference type="PATRIC" id="fig|99287.12.peg.4107"/>
<dbReference type="HOGENOM" id="CLU_071543_0_0_6"/>
<dbReference type="OMA" id="QSRICMF"/>
<dbReference type="PhylomeDB" id="Q8ZKW4"/>
<dbReference type="BioCyc" id="SENT99287:STM3877-MONOMER"/>
<dbReference type="UniPathway" id="UPA00134">
    <property type="reaction ID" value="UER00194"/>
</dbReference>
<dbReference type="Proteomes" id="UP000001014">
    <property type="component" value="Chromosome"/>
</dbReference>
<dbReference type="GO" id="GO:0005829">
    <property type="term" value="C:cytosol"/>
    <property type="evidence" value="ECO:0000318"/>
    <property type="project" value="GO_Central"/>
</dbReference>
<dbReference type="GO" id="GO:0004071">
    <property type="term" value="F:aspartate-ammonia ligase activity"/>
    <property type="evidence" value="ECO:0000318"/>
    <property type="project" value="GO_Central"/>
</dbReference>
<dbReference type="GO" id="GO:0005524">
    <property type="term" value="F:ATP binding"/>
    <property type="evidence" value="ECO:0007669"/>
    <property type="project" value="UniProtKB-UniRule"/>
</dbReference>
<dbReference type="GO" id="GO:0006529">
    <property type="term" value="P:asparagine biosynthetic process"/>
    <property type="evidence" value="ECO:0000318"/>
    <property type="project" value="GO_Central"/>
</dbReference>
<dbReference type="GO" id="GO:0070981">
    <property type="term" value="P:L-asparagine biosynthetic process"/>
    <property type="evidence" value="ECO:0007669"/>
    <property type="project" value="UniProtKB-UniRule"/>
</dbReference>
<dbReference type="CDD" id="cd00645">
    <property type="entry name" value="AsnA"/>
    <property type="match status" value="1"/>
</dbReference>
<dbReference type="FunFam" id="3.30.930.10:FF:000025">
    <property type="entry name" value="Aspartate--ammonia ligase"/>
    <property type="match status" value="1"/>
</dbReference>
<dbReference type="Gene3D" id="3.30.930.10">
    <property type="entry name" value="Bira Bifunctional Protein, Domain 2"/>
    <property type="match status" value="1"/>
</dbReference>
<dbReference type="HAMAP" id="MF_00555">
    <property type="entry name" value="AsnA"/>
    <property type="match status" value="1"/>
</dbReference>
<dbReference type="InterPro" id="IPR006195">
    <property type="entry name" value="aa-tRNA-synth_II"/>
</dbReference>
<dbReference type="InterPro" id="IPR045864">
    <property type="entry name" value="aa-tRNA-synth_II/BPL/LPL"/>
</dbReference>
<dbReference type="InterPro" id="IPR004618">
    <property type="entry name" value="AsnA"/>
</dbReference>
<dbReference type="NCBIfam" id="TIGR00669">
    <property type="entry name" value="asnA"/>
    <property type="match status" value="1"/>
</dbReference>
<dbReference type="PANTHER" id="PTHR30073">
    <property type="entry name" value="ASPARTATE--AMMONIA LIGASE"/>
    <property type="match status" value="1"/>
</dbReference>
<dbReference type="PANTHER" id="PTHR30073:SF5">
    <property type="entry name" value="ASPARTATE--AMMONIA LIGASE"/>
    <property type="match status" value="1"/>
</dbReference>
<dbReference type="Pfam" id="PF03590">
    <property type="entry name" value="AsnA"/>
    <property type="match status" value="1"/>
</dbReference>
<dbReference type="PIRSF" id="PIRSF001555">
    <property type="entry name" value="Asp_ammon_ligase"/>
    <property type="match status" value="1"/>
</dbReference>
<dbReference type="SUPFAM" id="SSF55681">
    <property type="entry name" value="Class II aaRS and biotin synthetases"/>
    <property type="match status" value="1"/>
</dbReference>
<dbReference type="PROSITE" id="PS50862">
    <property type="entry name" value="AA_TRNA_LIGASE_II"/>
    <property type="match status" value="1"/>
</dbReference>
<name>ASNA_SALTY</name>
<feature type="chain" id="PRO_0000195887" description="Aspartate--ammonia ligase">
    <location>
        <begin position="1"/>
        <end position="330"/>
    </location>
</feature>
<proteinExistence type="inferred from homology"/>
<gene>
    <name evidence="2" type="primary">asnA</name>
    <name type="ordered locus">STM3877</name>
</gene>
<keyword id="KW-0028">Amino-acid biosynthesis</keyword>
<keyword id="KW-0061">Asparagine biosynthesis</keyword>
<keyword id="KW-0067">ATP-binding</keyword>
<keyword id="KW-0963">Cytoplasm</keyword>
<keyword id="KW-0436">Ligase</keyword>
<keyword id="KW-0547">Nucleotide-binding</keyword>
<keyword id="KW-1185">Reference proteome</keyword>
<protein>
    <recommendedName>
        <fullName evidence="2">Aspartate--ammonia ligase</fullName>
        <ecNumber evidence="2">6.3.1.1</ecNumber>
    </recommendedName>
    <alternativeName>
        <fullName evidence="2">Asparagine synthetase A</fullName>
    </alternativeName>
</protein>
<evidence type="ECO:0000250" key="1"/>
<evidence type="ECO:0000255" key="2">
    <source>
        <dbReference type="HAMAP-Rule" id="MF_00555"/>
    </source>
</evidence>